<name>SPCS2_CANLF</name>
<keyword id="KW-0007">Acetylation</keyword>
<keyword id="KW-0903">Direct protein sequencing</keyword>
<keyword id="KW-0256">Endoplasmic reticulum</keyword>
<keyword id="KW-0472">Membrane</keyword>
<keyword id="KW-1185">Reference proteome</keyword>
<keyword id="KW-0812">Transmembrane</keyword>
<keyword id="KW-1133">Transmembrane helix</keyword>
<reference key="1">
    <citation type="journal article" date="1994" name="J. Biol. Chem.">
        <title>cDNA-derived primary structure of the 25-kDa subunit of canine microsomal signal peptidase complex.</title>
        <authorList>
            <person name="Greenburg G."/>
            <person name="Blobel G."/>
        </authorList>
    </citation>
    <scope>NUCLEOTIDE SEQUENCE [MRNA]</scope>
    <scope>PARTIAL PROTEIN SEQUENCE</scope>
    <source>
        <tissue>Liver</tissue>
    </source>
</reference>
<reference key="2">
    <citation type="journal article" date="1986" name="Proc. Natl. Acad. Sci. U.S.A.">
        <title>Purification of microsomal signal peptidase as a complex.</title>
        <authorList>
            <person name="Evans E.A."/>
            <person name="Gilmore R."/>
            <person name="Blobel G."/>
        </authorList>
    </citation>
    <scope>FUNCTION</scope>
    <scope>IDENTIFICATION IN THE SIGNAL PEPTIDASE COMPLEX</scope>
    <scope>SUBCELLULAR LOCATION</scope>
</reference>
<reference key="3">
    <citation type="journal article" date="1996" name="J. Biol. Chem.">
        <title>Membrane topology of the 12- and the 25-kDa subunits of the mammalian signal peptidase complex.</title>
        <authorList>
            <person name="Kalies K.-U."/>
            <person name="Hartmann E."/>
        </authorList>
    </citation>
    <scope>SUBCELLULAR LOCATION</scope>
    <scope>TOPOLOGY</scope>
</reference>
<proteinExistence type="evidence at protein level"/>
<protein>
    <recommendedName>
        <fullName>Signal peptidase complex subunit 2</fullName>
    </recommendedName>
    <alternativeName>
        <fullName>Microsomal signal peptidase 25 kDa subunit</fullName>
        <shortName>SPase 25 kDa subunit</shortName>
    </alternativeName>
</protein>
<accession>Q28250</accession>
<comment type="function">
    <text evidence="1 5">Component of the signal peptidase complex (SPC) which catalyzes the cleavage of N-terminal signal sequences from nascent proteins as they are translocated into the lumen of the endoplasmic reticulum (PubMed:3511473). Enhances the enzymatic activity of SPC and facilitates the interactions between different components of the translocation site (By similarity).</text>
</comment>
<comment type="subunit">
    <text evidence="2 5">Component of the signal peptidase complex paralog A (SPC-A) composed of a catalytic subunit SEC11A and three accessory subunits SPCS1, SPCS2 and SPCS3 (PubMed:3511473). Component of the signal peptidase complex paralog C (SPC-C) composed of a catalytic subunit SEC11C and three accessory subunits SPCS1, SPCS2 and SPCS3 (PubMed:3511473). Within the complex, interacts with SEC11A or SEC11C and SPCS1 (By similarity). The complex induces a local thinning of the ER membrane which is used to measure the length of the signal peptide (SP) h-region of protein substrates (By similarity). This ensures the selectivity of the complex towards h-regions shorter than 18-20 amino acids (By similarity).</text>
</comment>
<comment type="subcellular location">
    <subcellularLocation>
        <location evidence="5 6">Endoplasmic reticulum membrane</location>
        <topology evidence="6">Multi-pass membrane protein</topology>
    </subcellularLocation>
</comment>
<comment type="similarity">
    <text evidence="7">Belongs to the SPCS2 family.</text>
</comment>
<evidence type="ECO:0000250" key="1">
    <source>
        <dbReference type="UniProtKB" id="Q04969"/>
    </source>
</evidence>
<evidence type="ECO:0000250" key="2">
    <source>
        <dbReference type="UniProtKB" id="Q15005"/>
    </source>
</evidence>
<evidence type="ECO:0000255" key="3"/>
<evidence type="ECO:0000256" key="4">
    <source>
        <dbReference type="SAM" id="MobiDB-lite"/>
    </source>
</evidence>
<evidence type="ECO:0000269" key="5">
    <source>
    </source>
</evidence>
<evidence type="ECO:0000269" key="6">
    <source>
    </source>
</evidence>
<evidence type="ECO:0000305" key="7"/>
<feature type="initiator methionine" description="Removed" evidence="2">
    <location>
        <position position="1"/>
    </location>
</feature>
<feature type="chain" id="PRO_0000221157" description="Signal peptidase complex subunit 2">
    <location>
        <begin position="2"/>
        <end position="226"/>
    </location>
</feature>
<feature type="topological domain" description="Cytoplasmic" evidence="6">
    <location>
        <begin position="2"/>
        <end position="86"/>
    </location>
</feature>
<feature type="transmembrane region" description="Helical" evidence="3">
    <location>
        <begin position="87"/>
        <end position="107"/>
    </location>
</feature>
<feature type="topological domain" description="Lumenal" evidence="6">
    <location>
        <begin position="108"/>
        <end position="111"/>
    </location>
</feature>
<feature type="transmembrane region" description="Helical" evidence="3">
    <location>
        <begin position="112"/>
        <end position="132"/>
    </location>
</feature>
<feature type="topological domain" description="Cytoplasmic" evidence="6">
    <location>
        <begin position="133"/>
        <end position="226"/>
    </location>
</feature>
<feature type="region of interest" description="Disordered" evidence="4">
    <location>
        <begin position="1"/>
        <end position="37"/>
    </location>
</feature>
<feature type="compositionally biased region" description="Gly residues" evidence="4">
    <location>
        <begin position="9"/>
        <end position="32"/>
    </location>
</feature>
<feature type="modified residue" description="N-acetylalanine" evidence="2">
    <location>
        <position position="2"/>
    </location>
</feature>
<feature type="modified residue" description="N6-acetyllysine" evidence="2">
    <location>
        <position position="169"/>
    </location>
</feature>
<feature type="modified residue" description="N6-acetyllysine" evidence="2">
    <location>
        <position position="191"/>
    </location>
</feature>
<organism>
    <name type="scientific">Canis lupus familiaris</name>
    <name type="common">Dog</name>
    <name type="synonym">Canis familiaris</name>
    <dbReference type="NCBI Taxonomy" id="9615"/>
    <lineage>
        <taxon>Eukaryota</taxon>
        <taxon>Metazoa</taxon>
        <taxon>Chordata</taxon>
        <taxon>Craniata</taxon>
        <taxon>Vertebrata</taxon>
        <taxon>Euteleostomi</taxon>
        <taxon>Mammalia</taxon>
        <taxon>Eutheria</taxon>
        <taxon>Laurasiatheria</taxon>
        <taxon>Carnivora</taxon>
        <taxon>Caniformia</taxon>
        <taxon>Canidae</taxon>
        <taxon>Canis</taxon>
    </lineage>
</organism>
<gene>
    <name type="primary">SPCS2</name>
    <name type="synonym">SPC25</name>
</gene>
<dbReference type="EMBL" id="U12687">
    <property type="protein sequence ID" value="AAA21254.1"/>
    <property type="molecule type" value="mRNA"/>
</dbReference>
<dbReference type="PIR" id="A55012">
    <property type="entry name" value="A55012"/>
</dbReference>
<dbReference type="RefSeq" id="NP_001003324.1">
    <property type="nucleotide sequence ID" value="NM_001003324.2"/>
</dbReference>
<dbReference type="SMR" id="Q28250"/>
<dbReference type="CORUM" id="Q28250"/>
<dbReference type="FunCoup" id="Q28250">
    <property type="interactions" value="2875"/>
</dbReference>
<dbReference type="STRING" id="9615.ENSCAFP00000042144"/>
<dbReference type="MEROPS" id="X44.001"/>
<dbReference type="PaxDb" id="9612-ENSCAFP00000042144"/>
<dbReference type="Ensembl" id="ENSCAFT00000046052.3">
    <property type="protein sequence ID" value="ENSCAFP00000042144.1"/>
    <property type="gene ID" value="ENSCAFG00000032663.3"/>
</dbReference>
<dbReference type="Ensembl" id="ENSCAFT00030031158.1">
    <property type="protein sequence ID" value="ENSCAFP00030027188.1"/>
    <property type="gene ID" value="ENSCAFG00030016843.1"/>
</dbReference>
<dbReference type="Ensembl" id="ENSCAFT00040033516.1">
    <property type="protein sequence ID" value="ENSCAFP00040029164.1"/>
    <property type="gene ID" value="ENSCAFG00040018129.1"/>
</dbReference>
<dbReference type="Ensembl" id="ENSCAFT00845010762.1">
    <property type="protein sequence ID" value="ENSCAFP00845008397.1"/>
    <property type="gene ID" value="ENSCAFG00845006071.1"/>
</dbReference>
<dbReference type="GeneID" id="404016"/>
<dbReference type="KEGG" id="cfa:404016"/>
<dbReference type="CTD" id="9789"/>
<dbReference type="VEuPathDB" id="HostDB:ENSCAFG00845006071"/>
<dbReference type="VGNC" id="VGNC:46725">
    <property type="gene designation" value="SPCS2"/>
</dbReference>
<dbReference type="eggNOG" id="KOG4072">
    <property type="taxonomic scope" value="Eukaryota"/>
</dbReference>
<dbReference type="GeneTree" id="ENSGT00440000038181"/>
<dbReference type="HOGENOM" id="CLU_094622_0_0_1"/>
<dbReference type="InParanoid" id="Q28250"/>
<dbReference type="OMA" id="INKWDGT"/>
<dbReference type="OrthoDB" id="29558at2759"/>
<dbReference type="TreeFam" id="TF314545"/>
<dbReference type="Reactome" id="R-CFA-422085">
    <property type="pathway name" value="Synthesis, secretion, and deacylation of Ghrelin"/>
</dbReference>
<dbReference type="Proteomes" id="UP000002254">
    <property type="component" value="Chromosome 21"/>
</dbReference>
<dbReference type="Proteomes" id="UP000694429">
    <property type="component" value="Chromosome 21"/>
</dbReference>
<dbReference type="Proteomes" id="UP000694542">
    <property type="component" value="Chromosome 21"/>
</dbReference>
<dbReference type="Proteomes" id="UP000805418">
    <property type="component" value="Chromosome 21"/>
</dbReference>
<dbReference type="Bgee" id="ENSCAFG00000032663">
    <property type="expression patterns" value="Expressed in thyroid gland and 45 other cell types or tissues"/>
</dbReference>
<dbReference type="GO" id="GO:0005789">
    <property type="term" value="C:endoplasmic reticulum membrane"/>
    <property type="evidence" value="ECO:0000304"/>
    <property type="project" value="Reactome"/>
</dbReference>
<dbReference type="GO" id="GO:0005787">
    <property type="term" value="C:signal peptidase complex"/>
    <property type="evidence" value="ECO:0000314"/>
    <property type="project" value="UniProtKB"/>
</dbReference>
<dbReference type="GO" id="GO:0045047">
    <property type="term" value="P:protein targeting to ER"/>
    <property type="evidence" value="ECO:0000318"/>
    <property type="project" value="GO_Central"/>
</dbReference>
<dbReference type="GO" id="GO:0006465">
    <property type="term" value="P:signal peptide processing"/>
    <property type="evidence" value="ECO:0000318"/>
    <property type="project" value="GO_Central"/>
</dbReference>
<dbReference type="InterPro" id="IPR009582">
    <property type="entry name" value="Spc2/SPCS2"/>
</dbReference>
<dbReference type="PANTHER" id="PTHR13085">
    <property type="entry name" value="MICROSOMAL SIGNAL PEPTIDASE 25 KDA SUBUNIT"/>
    <property type="match status" value="1"/>
</dbReference>
<dbReference type="PANTHER" id="PTHR13085:SF0">
    <property type="entry name" value="SIGNAL PEPTIDASE COMPLEX SUBUNIT 2"/>
    <property type="match status" value="1"/>
</dbReference>
<dbReference type="Pfam" id="PF06703">
    <property type="entry name" value="SPC25"/>
    <property type="match status" value="1"/>
</dbReference>
<sequence length="226" mass="24942">MAAASAQGGRTGGGGGSSGPGGGPTCGSGSGRSGLLDKWKIDDKPVKIDKWDGSAVKNSLDDSAKKVLLEKYKYVENFGLIDGRLTICTISCFFAIVALIWDYMHPFPESKPVLALCVISYFVMMGILTIYTSYKEKSIFLVAHRKDPTGMDPDDIWQLSSSLKRFDDKYTLKLTFISGRTKQQREAEFTKSIAKFFDHSGTLVMDAYEPEISRLHDSLATERKIK</sequence>